<reference key="1">
    <citation type="journal article" date="2006" name="Science">
        <title>The genome of black cottonwood, Populus trichocarpa (Torr. &amp; Gray).</title>
        <authorList>
            <person name="Tuskan G.A."/>
            <person name="Difazio S."/>
            <person name="Jansson S."/>
            <person name="Bohlmann J."/>
            <person name="Grigoriev I."/>
            <person name="Hellsten U."/>
            <person name="Putnam N."/>
            <person name="Ralph S."/>
            <person name="Rombauts S."/>
            <person name="Salamov A."/>
            <person name="Schein J."/>
            <person name="Sterck L."/>
            <person name="Aerts A."/>
            <person name="Bhalerao R.R."/>
            <person name="Bhalerao R.P."/>
            <person name="Blaudez D."/>
            <person name="Boerjan W."/>
            <person name="Brun A."/>
            <person name="Brunner A."/>
            <person name="Busov V."/>
            <person name="Campbell M."/>
            <person name="Carlson J."/>
            <person name="Chalot M."/>
            <person name="Chapman J."/>
            <person name="Chen G.-L."/>
            <person name="Cooper D."/>
            <person name="Coutinho P.M."/>
            <person name="Couturier J."/>
            <person name="Covert S."/>
            <person name="Cronk Q."/>
            <person name="Cunningham R."/>
            <person name="Davis J."/>
            <person name="Degroeve S."/>
            <person name="Dejardin A."/>
            <person name="dePamphilis C.W."/>
            <person name="Detter J."/>
            <person name="Dirks B."/>
            <person name="Dubchak I."/>
            <person name="Duplessis S."/>
            <person name="Ehlting J."/>
            <person name="Ellis B."/>
            <person name="Gendler K."/>
            <person name="Goodstein D."/>
            <person name="Gribskov M."/>
            <person name="Grimwood J."/>
            <person name="Groover A."/>
            <person name="Gunter L."/>
            <person name="Hamberger B."/>
            <person name="Heinze B."/>
            <person name="Helariutta Y."/>
            <person name="Henrissat B."/>
            <person name="Holligan D."/>
            <person name="Holt R."/>
            <person name="Huang W."/>
            <person name="Islam-Faridi N."/>
            <person name="Jones S."/>
            <person name="Jones-Rhoades M."/>
            <person name="Jorgensen R."/>
            <person name="Joshi C."/>
            <person name="Kangasjaervi J."/>
            <person name="Karlsson J."/>
            <person name="Kelleher C."/>
            <person name="Kirkpatrick R."/>
            <person name="Kirst M."/>
            <person name="Kohler A."/>
            <person name="Kalluri U."/>
            <person name="Larimer F."/>
            <person name="Leebens-Mack J."/>
            <person name="Leple J.-C."/>
            <person name="Locascio P."/>
            <person name="Lou Y."/>
            <person name="Lucas S."/>
            <person name="Martin F."/>
            <person name="Montanini B."/>
            <person name="Napoli C."/>
            <person name="Nelson D.R."/>
            <person name="Nelson C."/>
            <person name="Nieminen K."/>
            <person name="Nilsson O."/>
            <person name="Pereda V."/>
            <person name="Peter G."/>
            <person name="Philippe R."/>
            <person name="Pilate G."/>
            <person name="Poliakov A."/>
            <person name="Razumovskaya J."/>
            <person name="Richardson P."/>
            <person name="Rinaldi C."/>
            <person name="Ritland K."/>
            <person name="Rouze P."/>
            <person name="Ryaboy D."/>
            <person name="Schmutz J."/>
            <person name="Schrader J."/>
            <person name="Segerman B."/>
            <person name="Shin H."/>
            <person name="Siddiqui A."/>
            <person name="Sterky F."/>
            <person name="Terry A."/>
            <person name="Tsai C.-J."/>
            <person name="Uberbacher E."/>
            <person name="Unneberg P."/>
            <person name="Vahala J."/>
            <person name="Wall K."/>
            <person name="Wessler S."/>
            <person name="Yang G."/>
            <person name="Yin T."/>
            <person name="Douglas C."/>
            <person name="Marra M."/>
            <person name="Sandberg G."/>
            <person name="Van de Peer Y."/>
            <person name="Rokhsar D.S."/>
        </authorList>
    </citation>
    <scope>NUCLEOTIDE SEQUENCE [LARGE SCALE GENOMIC DNA]</scope>
    <source>
        <strain>cv. Nisqually</strain>
    </source>
</reference>
<reference key="2">
    <citation type="submission" date="2008-12" db="EMBL/GenBank/DDBJ databases">
        <authorList>
            <consortium name="US DOE Joint Genome Institute (JGI-PGF)"/>
            <person name="Grigoriev I.V."/>
            <person name="Terry A."/>
            <person name="Salamov A.A."/>
            <person name="Otillar R."/>
            <person name="Lou Y."/>
            <person name="Lucas S."/>
            <person name="Hammon N."/>
            <person name="Glavina del Rio T."/>
            <person name="Detter J."/>
            <person name="Kalin E."/>
            <person name="Tice H."/>
            <person name="Pitluck S."/>
            <person name="Chapman J."/>
            <person name="Putnam N.H."/>
            <person name="Brunner A."/>
            <person name="Busov V."/>
            <person name="Campbell M."/>
            <person name="Chalot M."/>
            <person name="Covert S."/>
            <person name="Davis J."/>
            <person name="DiFazio S."/>
            <person name="Gribskov M."/>
            <person name="Gunter L."/>
            <person name="Hamberger B."/>
            <person name="Jansson S."/>
            <person name="Joshi C."/>
            <person name="Larimer F."/>
            <person name="Martin F."/>
            <person name="Napoli C."/>
            <person name="Nelson D."/>
            <person name="Ralph S."/>
            <person name="Rombauts S."/>
            <person name="Rouze P."/>
            <person name="Schrader J."/>
            <person name="Tsai C."/>
            <person name="Vahala J."/>
            <person name="Tuskan G."/>
            <person name="Rokhsar D."/>
        </authorList>
    </citation>
    <scope>GENOME REANNOTATION</scope>
    <source>
        <strain>cv. Nisqually</strain>
    </source>
</reference>
<evidence type="ECO:0000250" key="1">
    <source>
        <dbReference type="UniProtKB" id="O04983"/>
    </source>
</evidence>
<evidence type="ECO:0000250" key="2">
    <source>
        <dbReference type="UniProtKB" id="P24182"/>
    </source>
</evidence>
<evidence type="ECO:0000255" key="3"/>
<evidence type="ECO:0000255" key="4">
    <source>
        <dbReference type="PROSITE-ProRule" id="PRU00409"/>
    </source>
</evidence>
<evidence type="ECO:0000255" key="5">
    <source>
        <dbReference type="PROSITE-ProRule" id="PRU00969"/>
    </source>
</evidence>
<evidence type="ECO:0000305" key="6"/>
<dbReference type="EC" id="6.3.4.14" evidence="1"/>
<dbReference type="EMBL" id="CM009307">
    <property type="protein sequence ID" value="ERP49997.1"/>
    <property type="molecule type" value="Genomic_DNA"/>
</dbReference>
<dbReference type="RefSeq" id="XP_006372200.1">
    <property type="nucleotide sequence ID" value="XM_006372138.1"/>
</dbReference>
<dbReference type="SMR" id="B9N843"/>
<dbReference type="FunCoup" id="B9N843">
    <property type="interactions" value="1026"/>
</dbReference>
<dbReference type="STRING" id="3694.B9N843"/>
<dbReference type="KEGG" id="pop:18107844"/>
<dbReference type="eggNOG" id="KOG0238">
    <property type="taxonomic scope" value="Eukaryota"/>
</dbReference>
<dbReference type="HOGENOM" id="CLU_000395_3_2_1"/>
<dbReference type="InParanoid" id="B9N843"/>
<dbReference type="OrthoDB" id="196847at2759"/>
<dbReference type="UniPathway" id="UPA00655">
    <property type="reaction ID" value="UER00711"/>
</dbReference>
<dbReference type="Proteomes" id="UP000006729">
    <property type="component" value="Chromosome 18"/>
</dbReference>
<dbReference type="ExpressionAtlas" id="B9N843">
    <property type="expression patterns" value="differential"/>
</dbReference>
<dbReference type="GO" id="GO:0009507">
    <property type="term" value="C:chloroplast"/>
    <property type="evidence" value="ECO:0007669"/>
    <property type="project" value="UniProtKB-SubCell"/>
</dbReference>
<dbReference type="GO" id="GO:0003989">
    <property type="term" value="F:acetyl-CoA carboxylase activity"/>
    <property type="evidence" value="ECO:0007669"/>
    <property type="project" value="UniProtKB-EC"/>
</dbReference>
<dbReference type="GO" id="GO:0005524">
    <property type="term" value="F:ATP binding"/>
    <property type="evidence" value="ECO:0007669"/>
    <property type="project" value="UniProtKB-KW"/>
</dbReference>
<dbReference type="GO" id="GO:0004075">
    <property type="term" value="F:biotin carboxylase activity"/>
    <property type="evidence" value="ECO:0007669"/>
    <property type="project" value="UniProtKB-EC"/>
</dbReference>
<dbReference type="GO" id="GO:0046872">
    <property type="term" value="F:metal ion binding"/>
    <property type="evidence" value="ECO:0007669"/>
    <property type="project" value="UniProtKB-KW"/>
</dbReference>
<dbReference type="GO" id="GO:0006633">
    <property type="term" value="P:fatty acid biosynthetic process"/>
    <property type="evidence" value="ECO:0007669"/>
    <property type="project" value="UniProtKB-KW"/>
</dbReference>
<dbReference type="GO" id="GO:2001295">
    <property type="term" value="P:malonyl-CoA biosynthetic process"/>
    <property type="evidence" value="ECO:0007669"/>
    <property type="project" value="UniProtKB-UniPathway"/>
</dbReference>
<dbReference type="FunFam" id="3.30.1490.20:FF:000018">
    <property type="entry name" value="Biotin carboxylase"/>
    <property type="match status" value="1"/>
</dbReference>
<dbReference type="FunFam" id="3.30.470.20:FF:000028">
    <property type="entry name" value="Methylcrotonoyl-CoA carboxylase subunit alpha, mitochondrial"/>
    <property type="match status" value="1"/>
</dbReference>
<dbReference type="FunFam" id="3.40.50.20:FF:000010">
    <property type="entry name" value="Propionyl-CoA carboxylase subunit alpha"/>
    <property type="match status" value="1"/>
</dbReference>
<dbReference type="Gene3D" id="3.40.50.20">
    <property type="match status" value="1"/>
</dbReference>
<dbReference type="Gene3D" id="3.30.1490.20">
    <property type="entry name" value="ATP-grasp fold, A domain"/>
    <property type="match status" value="1"/>
</dbReference>
<dbReference type="Gene3D" id="3.30.470.20">
    <property type="entry name" value="ATP-grasp fold, B domain"/>
    <property type="match status" value="1"/>
</dbReference>
<dbReference type="InterPro" id="IPR051602">
    <property type="entry name" value="ACC_Biotin_Carboxylase"/>
</dbReference>
<dbReference type="InterPro" id="IPR004549">
    <property type="entry name" value="Acetyl_CoA_COase_biotin_COase"/>
</dbReference>
<dbReference type="InterPro" id="IPR011761">
    <property type="entry name" value="ATP-grasp"/>
</dbReference>
<dbReference type="InterPro" id="IPR013815">
    <property type="entry name" value="ATP_grasp_subdomain_1"/>
</dbReference>
<dbReference type="InterPro" id="IPR005481">
    <property type="entry name" value="BC-like_N"/>
</dbReference>
<dbReference type="InterPro" id="IPR011764">
    <property type="entry name" value="Biotin_carboxylation_dom"/>
</dbReference>
<dbReference type="InterPro" id="IPR005482">
    <property type="entry name" value="Biotin_COase_C"/>
</dbReference>
<dbReference type="InterPro" id="IPR005479">
    <property type="entry name" value="CbamoylP_synth_lsu-like_ATP-bd"/>
</dbReference>
<dbReference type="InterPro" id="IPR016185">
    <property type="entry name" value="PreATP-grasp_dom_sf"/>
</dbReference>
<dbReference type="InterPro" id="IPR011054">
    <property type="entry name" value="Rudment_hybrid_motif"/>
</dbReference>
<dbReference type="NCBIfam" id="TIGR00514">
    <property type="entry name" value="accC"/>
    <property type="match status" value="1"/>
</dbReference>
<dbReference type="NCBIfam" id="NF006367">
    <property type="entry name" value="PRK08591.1"/>
    <property type="match status" value="1"/>
</dbReference>
<dbReference type="PANTHER" id="PTHR48095:SF2">
    <property type="entry name" value="BIOTIN CARBOXYLASE, CHLOROPLASTIC"/>
    <property type="match status" value="1"/>
</dbReference>
<dbReference type="PANTHER" id="PTHR48095">
    <property type="entry name" value="PYRUVATE CARBOXYLASE SUBUNIT A"/>
    <property type="match status" value="1"/>
</dbReference>
<dbReference type="Pfam" id="PF02785">
    <property type="entry name" value="Biotin_carb_C"/>
    <property type="match status" value="1"/>
</dbReference>
<dbReference type="Pfam" id="PF00289">
    <property type="entry name" value="Biotin_carb_N"/>
    <property type="match status" value="1"/>
</dbReference>
<dbReference type="Pfam" id="PF02786">
    <property type="entry name" value="CPSase_L_D2"/>
    <property type="match status" value="1"/>
</dbReference>
<dbReference type="SMART" id="SM00878">
    <property type="entry name" value="Biotin_carb_C"/>
    <property type="match status" value="1"/>
</dbReference>
<dbReference type="SUPFAM" id="SSF56059">
    <property type="entry name" value="Glutathione synthetase ATP-binding domain-like"/>
    <property type="match status" value="1"/>
</dbReference>
<dbReference type="SUPFAM" id="SSF52440">
    <property type="entry name" value="PreATP-grasp domain"/>
    <property type="match status" value="1"/>
</dbReference>
<dbReference type="SUPFAM" id="SSF51246">
    <property type="entry name" value="Rudiment single hybrid motif"/>
    <property type="match status" value="1"/>
</dbReference>
<dbReference type="PROSITE" id="PS50975">
    <property type="entry name" value="ATP_GRASP"/>
    <property type="match status" value="1"/>
</dbReference>
<dbReference type="PROSITE" id="PS50979">
    <property type="entry name" value="BC"/>
    <property type="match status" value="1"/>
</dbReference>
<dbReference type="PROSITE" id="PS00866">
    <property type="entry name" value="CPSASE_1"/>
    <property type="match status" value="1"/>
</dbReference>
<dbReference type="PROSITE" id="PS00867">
    <property type="entry name" value="CPSASE_2"/>
    <property type="match status" value="1"/>
</dbReference>
<organism>
    <name type="scientific">Populus trichocarpa</name>
    <name type="common">Western balsam poplar</name>
    <name type="synonym">Populus balsamifera subsp. trichocarpa</name>
    <dbReference type="NCBI Taxonomy" id="3694"/>
    <lineage>
        <taxon>Eukaryota</taxon>
        <taxon>Viridiplantae</taxon>
        <taxon>Streptophyta</taxon>
        <taxon>Embryophyta</taxon>
        <taxon>Tracheophyta</taxon>
        <taxon>Spermatophyta</taxon>
        <taxon>Magnoliopsida</taxon>
        <taxon>eudicotyledons</taxon>
        <taxon>Gunneridae</taxon>
        <taxon>Pentapetalae</taxon>
        <taxon>rosids</taxon>
        <taxon>fabids</taxon>
        <taxon>Malpighiales</taxon>
        <taxon>Salicaceae</taxon>
        <taxon>Saliceae</taxon>
        <taxon>Populus</taxon>
    </lineage>
</organism>
<proteinExistence type="evidence at transcript level"/>
<feature type="transit peptide" description="Chloroplast" evidence="3">
    <location>
        <begin position="1"/>
        <end position="71"/>
    </location>
</feature>
<feature type="chain" id="PRO_0000391774" description="Biotin carboxylase 2, chloroplastic">
    <location>
        <begin position="72"/>
        <end position="526"/>
    </location>
</feature>
<feature type="domain" description="ATP-grasp" evidence="4">
    <location>
        <begin position="185"/>
        <end position="382"/>
    </location>
</feature>
<feature type="active site" evidence="2">
    <location>
        <position position="357"/>
    </location>
</feature>
<feature type="binding site" evidence="2">
    <location>
        <position position="181"/>
    </location>
    <ligand>
        <name>ATP</name>
        <dbReference type="ChEBI" id="CHEBI:30616"/>
    </ligand>
</feature>
<feature type="binding site" evidence="4">
    <location>
        <begin position="213"/>
        <end position="274"/>
    </location>
    <ligand>
        <name>ATP</name>
        <dbReference type="ChEBI" id="CHEBI:30616"/>
    </ligand>
</feature>
<feature type="binding site" evidence="2">
    <location>
        <position position="223"/>
    </location>
    <ligand>
        <name>ATP</name>
        <dbReference type="ChEBI" id="CHEBI:30616"/>
    </ligand>
</feature>
<feature type="binding site" evidence="2">
    <location>
        <begin position="229"/>
        <end position="230"/>
    </location>
    <ligand>
        <name>ATP</name>
        <dbReference type="ChEBI" id="CHEBI:30616"/>
    </ligand>
</feature>
<feature type="binding site" evidence="2">
    <location>
        <begin position="265"/>
        <end position="268"/>
    </location>
    <ligand>
        <name>ATP</name>
        <dbReference type="ChEBI" id="CHEBI:30616"/>
    </ligand>
</feature>
<feature type="binding site" evidence="2">
    <location>
        <position position="273"/>
    </location>
    <ligand>
        <name>ATP</name>
        <dbReference type="ChEBI" id="CHEBI:30616"/>
    </ligand>
</feature>
<feature type="binding site" evidence="2">
    <location>
        <position position="302"/>
    </location>
    <ligand>
        <name>hydrogencarbonate</name>
        <dbReference type="ChEBI" id="CHEBI:17544"/>
    </ligand>
</feature>
<feature type="binding site" evidence="2">
    <location>
        <position position="340"/>
    </location>
    <ligand>
        <name>ATP</name>
        <dbReference type="ChEBI" id="CHEBI:30616"/>
    </ligand>
</feature>
<feature type="binding site" evidence="5">
    <location>
        <position position="340"/>
    </location>
    <ligand>
        <name>Mg(2+)</name>
        <dbReference type="ChEBI" id="CHEBI:18420"/>
        <label>1</label>
    </ligand>
</feature>
<feature type="binding site" evidence="5">
    <location>
        <position position="340"/>
    </location>
    <ligand>
        <name>Mn(2+)</name>
        <dbReference type="ChEBI" id="CHEBI:29035"/>
        <label>1</label>
    </ligand>
</feature>
<feature type="binding site" evidence="2">
    <location>
        <position position="353"/>
    </location>
    <ligand>
        <name>ATP</name>
        <dbReference type="ChEBI" id="CHEBI:30616"/>
    </ligand>
</feature>
<feature type="binding site" evidence="5">
    <location>
        <position position="353"/>
    </location>
    <ligand>
        <name>Mg(2+)</name>
        <dbReference type="ChEBI" id="CHEBI:18420"/>
        <label>1</label>
    </ligand>
</feature>
<feature type="binding site" evidence="5">
    <location>
        <position position="353"/>
    </location>
    <ligand>
        <name>Mg(2+)</name>
        <dbReference type="ChEBI" id="CHEBI:18420"/>
        <label>2</label>
    </ligand>
</feature>
<feature type="binding site" evidence="5">
    <location>
        <position position="353"/>
    </location>
    <ligand>
        <name>Mn(2+)</name>
        <dbReference type="ChEBI" id="CHEBI:29035"/>
        <label>1</label>
    </ligand>
</feature>
<feature type="binding site" evidence="5">
    <location>
        <position position="353"/>
    </location>
    <ligand>
        <name>Mn(2+)</name>
        <dbReference type="ChEBI" id="CHEBI:29035"/>
        <label>2</label>
    </ligand>
</feature>
<feature type="binding site" evidence="5">
    <location>
        <position position="355"/>
    </location>
    <ligand>
        <name>Mg(2+)</name>
        <dbReference type="ChEBI" id="CHEBI:18420"/>
        <label>2</label>
    </ligand>
</feature>
<feature type="binding site" evidence="5">
    <location>
        <position position="355"/>
    </location>
    <ligand>
        <name>Mn(2+)</name>
        <dbReference type="ChEBI" id="CHEBI:29035"/>
        <label>2</label>
    </ligand>
</feature>
<feature type="binding site" evidence="2">
    <location>
        <position position="357"/>
    </location>
    <ligand>
        <name>hydrogencarbonate</name>
        <dbReference type="ChEBI" id="CHEBI:17544"/>
    </ligand>
</feature>
<feature type="binding site" evidence="2">
    <location>
        <position position="360"/>
    </location>
    <ligand>
        <name>hydrogencarbonate</name>
        <dbReference type="ChEBI" id="CHEBI:17544"/>
    </ligand>
</feature>
<feature type="binding site" evidence="2">
    <location>
        <position position="403"/>
    </location>
    <ligand>
        <name>biotin</name>
        <dbReference type="ChEBI" id="CHEBI:57586"/>
    </ligand>
</feature>
<feature type="binding site" evidence="2">
    <location>
        <position position="403"/>
    </location>
    <ligand>
        <name>hydrogencarbonate</name>
        <dbReference type="ChEBI" id="CHEBI:17544"/>
    </ligand>
</feature>
<protein>
    <recommendedName>
        <fullName>Biotin carboxylase 2, chloroplastic</fullName>
        <ecNumber evidence="1">6.3.4.14</ecNumber>
    </recommendedName>
    <alternativeName>
        <fullName evidence="6">Acetyl-coenzyme A carboxylase biotin carboxylase subunit A 2</fullName>
    </alternativeName>
</protein>
<accession>B9N843</accession>
<accession>U5FKU1</accession>
<keyword id="KW-0067">ATP-binding</keyword>
<keyword id="KW-0092">Biotin</keyword>
<keyword id="KW-0150">Chloroplast</keyword>
<keyword id="KW-0275">Fatty acid biosynthesis</keyword>
<keyword id="KW-0276">Fatty acid metabolism</keyword>
<keyword id="KW-0436">Ligase</keyword>
<keyword id="KW-0444">Lipid biosynthesis</keyword>
<keyword id="KW-0443">Lipid metabolism</keyword>
<keyword id="KW-0460">Magnesium</keyword>
<keyword id="KW-0464">Manganese</keyword>
<keyword id="KW-0479">Metal-binding</keyword>
<keyword id="KW-0547">Nucleotide-binding</keyword>
<keyword id="KW-0934">Plastid</keyword>
<keyword id="KW-1185">Reference proteome</keyword>
<keyword id="KW-0809">Transit peptide</keyword>
<gene>
    <name type="ORF">POPTR_0018s14250g</name>
</gene>
<name>ACCC2_POPTR</name>
<comment type="function">
    <text evidence="1">This protein is a component of the acetyl coenzyme A carboxylase complex; first, biotin carboxylase catalyzes the carboxylation of the carrier protein and then the transcarboxylase transfers the carboxyl group to form malonyl-CoA.</text>
</comment>
<comment type="catalytic activity">
    <reaction evidence="1">
        <text>N(6)-biotinyl-L-lysyl-[protein] + hydrogencarbonate + ATP = N(6)-carboxybiotinyl-L-lysyl-[protein] + ADP + phosphate + H(+)</text>
        <dbReference type="Rhea" id="RHEA:13501"/>
        <dbReference type="Rhea" id="RHEA-COMP:10505"/>
        <dbReference type="Rhea" id="RHEA-COMP:10506"/>
        <dbReference type="ChEBI" id="CHEBI:15378"/>
        <dbReference type="ChEBI" id="CHEBI:17544"/>
        <dbReference type="ChEBI" id="CHEBI:30616"/>
        <dbReference type="ChEBI" id="CHEBI:43474"/>
        <dbReference type="ChEBI" id="CHEBI:83144"/>
        <dbReference type="ChEBI" id="CHEBI:83145"/>
        <dbReference type="ChEBI" id="CHEBI:456216"/>
        <dbReference type="EC" id="6.3.4.14"/>
    </reaction>
</comment>
<comment type="cofactor">
    <cofactor evidence="5">
        <name>Mg(2+)</name>
        <dbReference type="ChEBI" id="CHEBI:18420"/>
    </cofactor>
    <cofactor evidence="5">
        <name>Mn(2+)</name>
        <dbReference type="ChEBI" id="CHEBI:29035"/>
    </cofactor>
    <text evidence="5">Binds 2 magnesium or manganese ions per subunit.</text>
</comment>
<comment type="pathway">
    <text>Lipid metabolism; malonyl-CoA biosynthesis; malonyl-CoA from acetyl-CoA: step 1/1.</text>
</comment>
<comment type="subunit">
    <text evidence="6">Acetyl-CoA carboxylase is a heterohexamer composed of biotin carboxyl carrier protein, biotin carboxylase and two subunits each of ACCase subunit alpha and ACCase plastid-coded subunit beta (accD).</text>
</comment>
<comment type="subcellular location">
    <subcellularLocation>
        <location evidence="6">Plastid</location>
        <location evidence="6">Chloroplast</location>
    </subcellularLocation>
</comment>
<sequence length="526" mass="57497">MEATLPVCKSVTSTPGLFMKRNSGIRNSQCSFMVGTKVNFPRQRTQATQANHCAKKNGGALGVTCRAEKILVANRGEIAVRVIRTAHELGIPCVAVYSTIDKDALHVKLADESVCIGEAPSNQSYLVIQNVLSAAISRGCTMLHPGYGFLAENAVFVEMCREHGINFIGPNPDSIRVMGDKSTARETMKKANVPTVPGSDGLLQSTEEAVKLASEIGYPVMIKATAGGGGRGMRLAKEPDEFVKLLQQAKSEAAAAFGNDGVYLEKYVQNPRHIEFQVLADKFGNVVHFGERDCSIQRRNQKLLEEAPSPALTPELRKAMGDAAVAAAASIGYIGVGTVEFLLDERGSFYFMEMNTRIQVEHPVTEMISSVDLIEEQIRVAMGEKIQYKQEDIVLRGHSIECRINAEDAFKGFRPGPGRITAYLPSGGPFVRMDSHVYPDYVVPPSYDSLLGKLIVWAPTREKAIERMKRALDDTIITGVPTTIDYHKLILDIEDFKNGNVDTAFIPKHEQELAAPQQIILANSAS</sequence>